<accession>Q57HH9</accession>
<keyword id="KW-0963">Cytoplasm</keyword>
<keyword id="KW-0501">Molybdenum cofactor biosynthesis</keyword>
<gene>
    <name evidence="1" type="primary">fdhD</name>
    <name type="ordered locus">SCH_3927</name>
</gene>
<name>FDHD_SALCH</name>
<dbReference type="EMBL" id="AE017220">
    <property type="protein sequence ID" value="AAX67833.1"/>
    <property type="molecule type" value="Genomic_DNA"/>
</dbReference>
<dbReference type="RefSeq" id="WP_001059668.1">
    <property type="nucleotide sequence ID" value="NC_006905.1"/>
</dbReference>
<dbReference type="SMR" id="Q57HH9"/>
<dbReference type="KEGG" id="sec:SCH_3927"/>
<dbReference type="HOGENOM" id="CLU_056887_2_0_6"/>
<dbReference type="Proteomes" id="UP000000538">
    <property type="component" value="Chromosome"/>
</dbReference>
<dbReference type="GO" id="GO:0005737">
    <property type="term" value="C:cytoplasm"/>
    <property type="evidence" value="ECO:0007669"/>
    <property type="project" value="UniProtKB-SubCell"/>
</dbReference>
<dbReference type="GO" id="GO:0097163">
    <property type="term" value="F:sulfur carrier activity"/>
    <property type="evidence" value="ECO:0007669"/>
    <property type="project" value="UniProtKB-UniRule"/>
</dbReference>
<dbReference type="GO" id="GO:0016783">
    <property type="term" value="F:sulfurtransferase activity"/>
    <property type="evidence" value="ECO:0007669"/>
    <property type="project" value="InterPro"/>
</dbReference>
<dbReference type="GO" id="GO:0006777">
    <property type="term" value="P:Mo-molybdopterin cofactor biosynthetic process"/>
    <property type="evidence" value="ECO:0007669"/>
    <property type="project" value="UniProtKB-UniRule"/>
</dbReference>
<dbReference type="Gene3D" id="3.10.20.10">
    <property type="match status" value="1"/>
</dbReference>
<dbReference type="Gene3D" id="3.40.140.10">
    <property type="entry name" value="Cytidine Deaminase, domain 2"/>
    <property type="match status" value="1"/>
</dbReference>
<dbReference type="HAMAP" id="MF_00187">
    <property type="entry name" value="FdhD"/>
    <property type="match status" value="1"/>
</dbReference>
<dbReference type="InterPro" id="IPR016193">
    <property type="entry name" value="Cytidine_deaminase-like"/>
</dbReference>
<dbReference type="InterPro" id="IPR003786">
    <property type="entry name" value="FdhD"/>
</dbReference>
<dbReference type="NCBIfam" id="TIGR00129">
    <property type="entry name" value="fdhD_narQ"/>
    <property type="match status" value="1"/>
</dbReference>
<dbReference type="PANTHER" id="PTHR30592">
    <property type="entry name" value="FORMATE DEHYDROGENASE"/>
    <property type="match status" value="1"/>
</dbReference>
<dbReference type="PANTHER" id="PTHR30592:SF1">
    <property type="entry name" value="SULFUR CARRIER PROTEIN FDHD"/>
    <property type="match status" value="1"/>
</dbReference>
<dbReference type="Pfam" id="PF02634">
    <property type="entry name" value="FdhD-NarQ"/>
    <property type="match status" value="1"/>
</dbReference>
<dbReference type="PIRSF" id="PIRSF015626">
    <property type="entry name" value="FdhD"/>
    <property type="match status" value="1"/>
</dbReference>
<dbReference type="SUPFAM" id="SSF53927">
    <property type="entry name" value="Cytidine deaminase-like"/>
    <property type="match status" value="1"/>
</dbReference>
<sequence length="278" mass="30316">MNNILFEEVLNVTDFTTSRQLTLWKREDLQSPQLDDVAEEVPVALVYNGISHVVMMASPKDLTHFAMGFSLSEGIIDSPREIYGMDVVPSCNGLEVQIDLSSRRFMGLKARRRALAGRTGCGVCGVEQLNDIGKPVQPLPFSQTFNLGNLDRALKHLNDFQPTGKLTGCTHAAAWVMPSGELAGGHEDVGRHVALDKLLGRRATEGEEWRQGAALVSSRASYEMVQKSAMCGVEILFAVSAATTLAVDVAERCNLTLVGFCKPGRATIYTHPQRLIAD</sequence>
<organism>
    <name type="scientific">Salmonella choleraesuis (strain SC-B67)</name>
    <dbReference type="NCBI Taxonomy" id="321314"/>
    <lineage>
        <taxon>Bacteria</taxon>
        <taxon>Pseudomonadati</taxon>
        <taxon>Pseudomonadota</taxon>
        <taxon>Gammaproteobacteria</taxon>
        <taxon>Enterobacterales</taxon>
        <taxon>Enterobacteriaceae</taxon>
        <taxon>Salmonella</taxon>
    </lineage>
</organism>
<reference key="1">
    <citation type="journal article" date="2005" name="Nucleic Acids Res.">
        <title>The genome sequence of Salmonella enterica serovar Choleraesuis, a highly invasive and resistant zoonotic pathogen.</title>
        <authorList>
            <person name="Chiu C.-H."/>
            <person name="Tang P."/>
            <person name="Chu C."/>
            <person name="Hu S."/>
            <person name="Bao Q."/>
            <person name="Yu J."/>
            <person name="Chou Y.-Y."/>
            <person name="Wang H.-S."/>
            <person name="Lee Y.-S."/>
        </authorList>
    </citation>
    <scope>NUCLEOTIDE SEQUENCE [LARGE SCALE GENOMIC DNA]</scope>
    <source>
        <strain>SC-B67</strain>
    </source>
</reference>
<protein>
    <recommendedName>
        <fullName evidence="1">Sulfur carrier protein FdhD</fullName>
    </recommendedName>
</protein>
<feature type="chain" id="PRO_0000152916" description="Sulfur carrier protein FdhD">
    <location>
        <begin position="1"/>
        <end position="278"/>
    </location>
</feature>
<feature type="active site" description="Cysteine persulfide intermediate" evidence="1">
    <location>
        <position position="121"/>
    </location>
</feature>
<feature type="binding site" evidence="1">
    <location>
        <begin position="260"/>
        <end position="265"/>
    </location>
    <ligand>
        <name>Mo-bis(molybdopterin guanine dinucleotide)</name>
        <dbReference type="ChEBI" id="CHEBI:60539"/>
    </ligand>
</feature>
<proteinExistence type="inferred from homology"/>
<evidence type="ECO:0000255" key="1">
    <source>
        <dbReference type="HAMAP-Rule" id="MF_00187"/>
    </source>
</evidence>
<comment type="function">
    <text evidence="1">Required for formate dehydrogenase (FDH) activity. Acts as a sulfur carrier protein that transfers sulfur from IscS to the molybdenum cofactor prior to its insertion into FDH.</text>
</comment>
<comment type="subcellular location">
    <subcellularLocation>
        <location evidence="1">Cytoplasm</location>
    </subcellularLocation>
</comment>
<comment type="similarity">
    <text evidence="1">Belongs to the FdhD family.</text>
</comment>